<reference key="1">
    <citation type="journal article" date="2002" name="Nat. Genet.">
        <title>AGPAT2 is mutated in congenital generalized lipodystrophy linked to chromosome 9q34.</title>
        <authorList>
            <person name="Agarwal A.K."/>
            <person name="Arioglu E."/>
            <person name="de Almeida S."/>
            <person name="Akkoc N."/>
            <person name="Taylor S.I."/>
            <person name="Bowcock A.M."/>
            <person name="Barnes R.I."/>
            <person name="Garg A."/>
        </authorList>
    </citation>
    <scope>NUCLEOTIDE SEQUENCE [MRNA]</scope>
    <source>
        <strain>BALB/cJ</strain>
        <tissue>Liver</tissue>
    </source>
</reference>
<reference key="2">
    <citation type="journal article" date="2005" name="Biochem. J.">
        <title>Cloning and characterization of murine 1-acyl-sn-glycerol 3-phosphate acyltransferases and their regulation by PPARalpha in murine heart.</title>
        <authorList>
            <person name="Lu B."/>
            <person name="Jiang Y.J."/>
            <person name="Zhou Y."/>
            <person name="Xu F.Y."/>
            <person name="Hatch G.M."/>
            <person name="Choy P.C."/>
        </authorList>
    </citation>
    <scope>FUNCTION</scope>
    <scope>CATALYTIC ACTIVITY</scope>
    <scope>TISSUE SPECIFICITY</scope>
    <scope>INDUCTION</scope>
    <source>
        <strain>C57BL/6J</strain>
    </source>
</reference>
<reference key="3">
    <citation type="journal article" date="2010" name="Cell">
        <title>A tissue-specific atlas of mouse protein phosphorylation and expression.</title>
        <authorList>
            <person name="Huttlin E.L."/>
            <person name="Jedrychowski M.P."/>
            <person name="Elias J.E."/>
            <person name="Goswami T."/>
            <person name="Rad R."/>
            <person name="Beausoleil S.A."/>
            <person name="Villen J."/>
            <person name="Haas W."/>
            <person name="Sowa M.E."/>
            <person name="Gygi S.P."/>
        </authorList>
    </citation>
    <scope>IDENTIFICATION BY MASS SPECTROMETRY [LARGE SCALE ANALYSIS]</scope>
    <source>
        <tissue>Brown adipose tissue</tissue>
        <tissue>Heart</tissue>
        <tissue>Kidney</tissue>
        <tissue>Liver</tissue>
        <tissue>Lung</tissue>
        <tissue>Spleen</tissue>
    </source>
</reference>
<name>PLCB_MOUSE</name>
<feature type="signal peptide" evidence="3">
    <location>
        <begin position="1"/>
        <end position="23"/>
    </location>
</feature>
<feature type="chain" id="PRO_0000208193" description="1-acyl-sn-glycerol-3-phosphate acyltransferase beta">
    <location>
        <begin position="24"/>
        <end position="278"/>
    </location>
</feature>
<feature type="topological domain" description="Lumenal" evidence="5">
    <location>
        <begin position="24"/>
        <end position="29"/>
    </location>
</feature>
<feature type="transmembrane region" description="Helical" evidence="3">
    <location>
        <begin position="30"/>
        <end position="50"/>
    </location>
</feature>
<feature type="topological domain" description="Cytoplasmic" evidence="5">
    <location>
        <begin position="51"/>
        <end position="121"/>
    </location>
</feature>
<feature type="transmembrane region" description="Helical" evidence="3">
    <location>
        <begin position="122"/>
        <end position="142"/>
    </location>
</feature>
<feature type="topological domain" description="Lumenal" evidence="5">
    <location>
        <begin position="143"/>
        <end position="278"/>
    </location>
</feature>
<feature type="short sequence motif" description="HXXXXD motif" evidence="2">
    <location>
        <begin position="98"/>
        <end position="103"/>
    </location>
</feature>
<feature type="short sequence motif" description="EGTR motif" evidence="1">
    <location>
        <begin position="172"/>
        <end position="175"/>
    </location>
</feature>
<sequence length="278" mass="31011">MDPWPWLTAALLLLLLLVQLSRTARFYAKVGLYCVLCLSFSAAASIVCLLRHGGRTVDNMSIISWFVRSFKYVYGLRFEVSGQKKLEVDGPCVIISNHQSILDMMGLMEILPKRCVQIAKRELMFTGPVGLIMYLGGVYFINRQQARTAMSVMADLGDLMVKENLKVWIYPEGTRNDNGDLLPFKKGAFYLAIQAQVPIIPVVYSSFSSFYNVKTKLFTSGTIKVQVLDAVPTNGLTDADVTKLVDTCYQSMRATFLQISQIPQENSAIKEPGVLPAQ</sequence>
<accession>Q8K3K7</accession>
<protein>
    <recommendedName>
        <fullName>1-acyl-sn-glycerol-3-phosphate acyltransferase beta</fullName>
        <ecNumber evidence="4">2.3.1.51</ecNumber>
    </recommendedName>
    <alternativeName>
        <fullName>1-acylglycerol-3-phosphate O-acyltransferase 2</fullName>
        <shortName>1-AGP acyltransferase 2</shortName>
        <shortName>1-AGPAT 2</shortName>
    </alternativeName>
    <alternativeName>
        <fullName evidence="1">Lysophosphatidic acid acyltransferase beta</fullName>
        <shortName>LPAAT-beta</shortName>
    </alternativeName>
</protein>
<keyword id="KW-0012">Acyltransferase</keyword>
<keyword id="KW-0256">Endoplasmic reticulum</keyword>
<keyword id="KW-0444">Lipid biosynthesis</keyword>
<keyword id="KW-0443">Lipid metabolism</keyword>
<keyword id="KW-0472">Membrane</keyword>
<keyword id="KW-0594">Phospholipid biosynthesis</keyword>
<keyword id="KW-1208">Phospholipid metabolism</keyword>
<keyword id="KW-1185">Reference proteome</keyword>
<keyword id="KW-0732">Signal</keyword>
<keyword id="KW-0808">Transferase</keyword>
<keyword id="KW-0812">Transmembrane</keyword>
<keyword id="KW-1133">Transmembrane helix</keyword>
<dbReference type="EC" id="2.3.1.51" evidence="4"/>
<dbReference type="EMBL" id="AY072769">
    <property type="protein sequence ID" value="AAL62337.1"/>
    <property type="molecule type" value="mRNA"/>
</dbReference>
<dbReference type="CCDS" id="CCDS15809.1"/>
<dbReference type="RefSeq" id="NP_080488.1">
    <property type="nucleotide sequence ID" value="NM_026212.2"/>
</dbReference>
<dbReference type="SMR" id="Q8K3K7"/>
<dbReference type="FunCoup" id="Q8K3K7">
    <property type="interactions" value="736"/>
</dbReference>
<dbReference type="IntAct" id="Q8K3K7">
    <property type="interactions" value="1"/>
</dbReference>
<dbReference type="MINT" id="Q8K3K7"/>
<dbReference type="STRING" id="10090.ENSMUSP00000028286"/>
<dbReference type="iPTMnet" id="Q8K3K7"/>
<dbReference type="PhosphoSitePlus" id="Q8K3K7"/>
<dbReference type="SwissPalm" id="Q8K3K7"/>
<dbReference type="jPOST" id="Q8K3K7"/>
<dbReference type="PaxDb" id="10090-ENSMUSP00000028286"/>
<dbReference type="ProteomicsDB" id="289921"/>
<dbReference type="Antibodypedia" id="18762">
    <property type="antibodies" value="171 antibodies from 27 providers"/>
</dbReference>
<dbReference type="Ensembl" id="ENSMUST00000028286.12">
    <property type="protein sequence ID" value="ENSMUSP00000028286.6"/>
    <property type="gene ID" value="ENSMUSG00000026922.14"/>
</dbReference>
<dbReference type="GeneID" id="67512"/>
<dbReference type="KEGG" id="mmu:67512"/>
<dbReference type="UCSC" id="uc008ivt.2">
    <property type="organism name" value="mouse"/>
</dbReference>
<dbReference type="AGR" id="MGI:1914762"/>
<dbReference type="CTD" id="10555"/>
<dbReference type="MGI" id="MGI:1914762">
    <property type="gene designation" value="Agpat2"/>
</dbReference>
<dbReference type="VEuPathDB" id="HostDB:ENSMUSG00000026922"/>
<dbReference type="eggNOG" id="KOG2848">
    <property type="taxonomic scope" value="Eukaryota"/>
</dbReference>
<dbReference type="GeneTree" id="ENSGT00390000008726"/>
<dbReference type="HOGENOM" id="CLU_027938_10_1_1"/>
<dbReference type="InParanoid" id="Q8K3K7"/>
<dbReference type="OMA" id="MPRPLCY"/>
<dbReference type="OrthoDB" id="202234at2759"/>
<dbReference type="PhylomeDB" id="Q8K3K7"/>
<dbReference type="TreeFam" id="TF314867"/>
<dbReference type="BRENDA" id="2.3.1.51">
    <property type="organism ID" value="3474"/>
</dbReference>
<dbReference type="Reactome" id="R-MMU-1483166">
    <property type="pathway name" value="Synthesis of PA"/>
</dbReference>
<dbReference type="Reactome" id="R-MMU-6798695">
    <property type="pathway name" value="Neutrophil degranulation"/>
</dbReference>
<dbReference type="UniPathway" id="UPA00557">
    <property type="reaction ID" value="UER00613"/>
</dbReference>
<dbReference type="BioGRID-ORCS" id="67512">
    <property type="hits" value="3 hits in 78 CRISPR screens"/>
</dbReference>
<dbReference type="PRO" id="PR:Q8K3K7"/>
<dbReference type="Proteomes" id="UP000000589">
    <property type="component" value="Chromosome 2"/>
</dbReference>
<dbReference type="RNAct" id="Q8K3K7">
    <property type="molecule type" value="protein"/>
</dbReference>
<dbReference type="Bgee" id="ENSMUSG00000026922">
    <property type="expression patterns" value="Expressed in brown adipose tissue and 189 other cell types or tissues"/>
</dbReference>
<dbReference type="ExpressionAtlas" id="Q8K3K7">
    <property type="expression patterns" value="baseline and differential"/>
</dbReference>
<dbReference type="GO" id="GO:0005783">
    <property type="term" value="C:endoplasmic reticulum"/>
    <property type="evidence" value="ECO:0000314"/>
    <property type="project" value="UniProtKB"/>
</dbReference>
<dbReference type="GO" id="GO:0005789">
    <property type="term" value="C:endoplasmic reticulum membrane"/>
    <property type="evidence" value="ECO:0000314"/>
    <property type="project" value="MGI"/>
</dbReference>
<dbReference type="GO" id="GO:0003841">
    <property type="term" value="F:1-acylglycerol-3-phosphate O-acyltransferase activity"/>
    <property type="evidence" value="ECO:0000314"/>
    <property type="project" value="UniProtKB"/>
</dbReference>
<dbReference type="GO" id="GO:0016024">
    <property type="term" value="P:CDP-diacylglycerol biosynthetic process"/>
    <property type="evidence" value="ECO:0007669"/>
    <property type="project" value="UniProtKB-UniPathway"/>
</dbReference>
<dbReference type="GO" id="GO:0008544">
    <property type="term" value="P:epidermis development"/>
    <property type="evidence" value="ECO:0007669"/>
    <property type="project" value="Ensembl"/>
</dbReference>
<dbReference type="GO" id="GO:0006654">
    <property type="term" value="P:phosphatidic acid biosynthetic process"/>
    <property type="evidence" value="ECO:0007669"/>
    <property type="project" value="Ensembl"/>
</dbReference>
<dbReference type="GO" id="GO:0008654">
    <property type="term" value="P:phospholipid biosynthetic process"/>
    <property type="evidence" value="ECO:0000303"/>
    <property type="project" value="UniProtKB"/>
</dbReference>
<dbReference type="GO" id="GO:0001819">
    <property type="term" value="P:positive regulation of cytokine production"/>
    <property type="evidence" value="ECO:0007669"/>
    <property type="project" value="Ensembl"/>
</dbReference>
<dbReference type="GO" id="GO:0009410">
    <property type="term" value="P:response to xenobiotic stimulus"/>
    <property type="evidence" value="ECO:0007669"/>
    <property type="project" value="Ensembl"/>
</dbReference>
<dbReference type="GO" id="GO:0019432">
    <property type="term" value="P:triglyceride biosynthetic process"/>
    <property type="evidence" value="ECO:0000315"/>
    <property type="project" value="MGI"/>
</dbReference>
<dbReference type="CDD" id="cd07989">
    <property type="entry name" value="LPLAT_AGPAT-like"/>
    <property type="match status" value="1"/>
</dbReference>
<dbReference type="InterPro" id="IPR004552">
    <property type="entry name" value="AGP_acyltrans"/>
</dbReference>
<dbReference type="InterPro" id="IPR002123">
    <property type="entry name" value="Plipid/glycerol_acylTrfase"/>
</dbReference>
<dbReference type="NCBIfam" id="TIGR00530">
    <property type="entry name" value="AGP_acyltrn"/>
    <property type="match status" value="1"/>
</dbReference>
<dbReference type="PANTHER" id="PTHR10434">
    <property type="entry name" value="1-ACYL-SN-GLYCEROL-3-PHOSPHATE ACYLTRANSFERASE"/>
    <property type="match status" value="1"/>
</dbReference>
<dbReference type="PANTHER" id="PTHR10434:SF2">
    <property type="entry name" value="1-ACYL-SN-GLYCEROL-3-PHOSPHATE ACYLTRANSFERASE BETA"/>
    <property type="match status" value="1"/>
</dbReference>
<dbReference type="Pfam" id="PF01553">
    <property type="entry name" value="Acyltransferase"/>
    <property type="match status" value="1"/>
</dbReference>
<dbReference type="SMART" id="SM00563">
    <property type="entry name" value="PlsC"/>
    <property type="match status" value="1"/>
</dbReference>
<dbReference type="SUPFAM" id="SSF69593">
    <property type="entry name" value="Glycerol-3-phosphate (1)-acyltransferase"/>
    <property type="match status" value="1"/>
</dbReference>
<evidence type="ECO:0000250" key="1">
    <source>
        <dbReference type="UniProtKB" id="O15120"/>
    </source>
</evidence>
<evidence type="ECO:0000250" key="2">
    <source>
        <dbReference type="UniProtKB" id="Q9D517"/>
    </source>
</evidence>
<evidence type="ECO:0000255" key="3"/>
<evidence type="ECO:0000269" key="4">
    <source>
    </source>
</evidence>
<evidence type="ECO:0000305" key="5"/>
<evidence type="ECO:0000305" key="6">
    <source>
    </source>
</evidence>
<comment type="function">
    <text evidence="4">Converts 1-acyl-sn-glycerol-3-phosphate (lysophosphatidic acid or LPA) into 1,2-diacyl-sn-glycerol-3-phosphate (phosphatidic acid or PA) by incorporating an acyl moiety at the sn-2 position of the glycerol backbone.</text>
</comment>
<comment type="catalytic activity">
    <reaction evidence="4">
        <text>a 1-acyl-sn-glycero-3-phosphate + an acyl-CoA = a 1,2-diacyl-sn-glycero-3-phosphate + CoA</text>
        <dbReference type="Rhea" id="RHEA:19709"/>
        <dbReference type="ChEBI" id="CHEBI:57287"/>
        <dbReference type="ChEBI" id="CHEBI:57970"/>
        <dbReference type="ChEBI" id="CHEBI:58342"/>
        <dbReference type="ChEBI" id="CHEBI:58608"/>
        <dbReference type="EC" id="2.3.1.51"/>
    </reaction>
    <physiologicalReaction direction="left-to-right" evidence="6">
        <dbReference type="Rhea" id="RHEA:19710"/>
    </physiologicalReaction>
</comment>
<comment type="catalytic activity">
    <reaction evidence="1">
        <text>1-(9Z-octadecenoyl)-sn-glycero-3-phosphate + (9Z)-octadecenoyl-CoA = 1,2-di-(9Z-octadecenoyl)-sn-glycero-3-phosphate + CoA</text>
        <dbReference type="Rhea" id="RHEA:37131"/>
        <dbReference type="ChEBI" id="CHEBI:57287"/>
        <dbReference type="ChEBI" id="CHEBI:57387"/>
        <dbReference type="ChEBI" id="CHEBI:74544"/>
        <dbReference type="ChEBI" id="CHEBI:74546"/>
    </reaction>
    <physiologicalReaction direction="left-to-right" evidence="1">
        <dbReference type="Rhea" id="RHEA:37132"/>
    </physiologicalReaction>
</comment>
<comment type="catalytic activity">
    <reaction evidence="1">
        <text>1-(9Z-octadecenoyl)-sn-glycero-3-phosphate + hexadecanoyl-CoA = 1-(9Z)-octadecenoyl-2-hexadecanoyl-sn-glycero-3-phosphate + CoA</text>
        <dbReference type="Rhea" id="RHEA:37143"/>
        <dbReference type="ChEBI" id="CHEBI:57287"/>
        <dbReference type="ChEBI" id="CHEBI:57379"/>
        <dbReference type="ChEBI" id="CHEBI:74544"/>
        <dbReference type="ChEBI" id="CHEBI:74551"/>
    </reaction>
    <physiologicalReaction direction="left-to-right" evidence="1">
        <dbReference type="Rhea" id="RHEA:37144"/>
    </physiologicalReaction>
</comment>
<comment type="catalytic activity">
    <reaction evidence="1">
        <text>heptadecanoyl-CoA + 1-(9Z-octadecenoyl)-sn-glycero-3-phosphate = 1-(9Z)-octadecenoyl-2-heptadecanoyl-sn-glycero-3-phosphate + CoA</text>
        <dbReference type="Rhea" id="RHEA:37155"/>
        <dbReference type="ChEBI" id="CHEBI:57287"/>
        <dbReference type="ChEBI" id="CHEBI:74307"/>
        <dbReference type="ChEBI" id="CHEBI:74544"/>
        <dbReference type="ChEBI" id="CHEBI:74558"/>
    </reaction>
    <physiologicalReaction direction="left-to-right" evidence="1">
        <dbReference type="Rhea" id="RHEA:37156"/>
    </physiologicalReaction>
</comment>
<comment type="catalytic activity">
    <reaction evidence="1">
        <text>1-(9Z-octadecenoyl)-sn-glycero-3-phosphate + (9Z,12Z)-octadecadienoyl-CoA = 1-(9Z)-octadecenoyl-2-(9Z,12Z)-octadecadienoyl-sn-glycero-3-phosphate + CoA</text>
        <dbReference type="Rhea" id="RHEA:37159"/>
        <dbReference type="ChEBI" id="CHEBI:57287"/>
        <dbReference type="ChEBI" id="CHEBI:57383"/>
        <dbReference type="ChEBI" id="CHEBI:74544"/>
        <dbReference type="ChEBI" id="CHEBI:74563"/>
    </reaction>
    <physiologicalReaction direction="left-to-right" evidence="1">
        <dbReference type="Rhea" id="RHEA:37160"/>
    </physiologicalReaction>
</comment>
<comment type="catalytic activity">
    <reaction evidence="1">
        <text>1-(9Z-octadecenoyl)-sn-glycero-3-phosphate + tetradecanoyl-CoA = 1-(9Z)-octadecenoyl-2-tetradecanoyl-sn-glycero-3-phosphate + CoA</text>
        <dbReference type="Rhea" id="RHEA:37171"/>
        <dbReference type="ChEBI" id="CHEBI:57287"/>
        <dbReference type="ChEBI" id="CHEBI:57385"/>
        <dbReference type="ChEBI" id="CHEBI:74544"/>
        <dbReference type="ChEBI" id="CHEBI:74579"/>
    </reaction>
    <physiologicalReaction direction="left-to-right" evidence="1">
        <dbReference type="Rhea" id="RHEA:37172"/>
    </physiologicalReaction>
</comment>
<comment type="catalytic activity">
    <reaction evidence="1">
        <text>pentadecanoyl-CoA + 1-(9Z-octadecenoyl)-sn-glycero-3-phosphate = 1-(9Z)-octadecenoyl-2-pentadecanoyl-sn-glycero-3-phosphate + CoA</text>
        <dbReference type="Rhea" id="RHEA:37175"/>
        <dbReference type="ChEBI" id="CHEBI:57287"/>
        <dbReference type="ChEBI" id="CHEBI:74309"/>
        <dbReference type="ChEBI" id="CHEBI:74544"/>
        <dbReference type="ChEBI" id="CHEBI:74578"/>
    </reaction>
    <physiologicalReaction direction="left-to-right" evidence="1">
        <dbReference type="Rhea" id="RHEA:37176"/>
    </physiologicalReaction>
</comment>
<comment type="catalytic activity">
    <reaction evidence="1">
        <text>1-hexadecanoyl-sn-glycero-3-phosphate + (9Z)-octadecenoyl-CoA = 1-hexadecanoyl-2-(9Z-octadecenoyl)-sn-glycero-3-phosphate + CoA</text>
        <dbReference type="Rhea" id="RHEA:33187"/>
        <dbReference type="ChEBI" id="CHEBI:57287"/>
        <dbReference type="ChEBI" id="CHEBI:57387"/>
        <dbReference type="ChEBI" id="CHEBI:57518"/>
        <dbReference type="ChEBI" id="CHEBI:64839"/>
    </reaction>
    <physiologicalReaction direction="left-to-right" evidence="1">
        <dbReference type="Rhea" id="RHEA:33188"/>
    </physiologicalReaction>
</comment>
<comment type="catalytic activity">
    <reaction evidence="1">
        <text>1-tetradecanoyl-sn-glycerol 3-phosphate + (9Z)-octadecenoyl-CoA = 1-tetradecanoyl-2-(9Z)-octadecenoyl-sn-glycero-3-phosphate + CoA</text>
        <dbReference type="Rhea" id="RHEA:37187"/>
        <dbReference type="ChEBI" id="CHEBI:57287"/>
        <dbReference type="ChEBI" id="CHEBI:57387"/>
        <dbReference type="ChEBI" id="CHEBI:72683"/>
        <dbReference type="ChEBI" id="CHEBI:74586"/>
    </reaction>
    <physiologicalReaction direction="left-to-right" evidence="1">
        <dbReference type="Rhea" id="RHEA:37188"/>
    </physiologicalReaction>
</comment>
<comment type="catalytic activity">
    <reaction evidence="1">
        <text>1-(9Z,12Z,15Z)-octadecatrienoyl-sn-glycero-3-phosphate + (9Z)-octadecenoyl-CoA = 1-(9Z,12Z,15Z)-octadecatrienoyl-2-(9Z)-octadecenoyl-sn-glycero-3-phosphate + CoA</text>
        <dbReference type="Rhea" id="RHEA:37139"/>
        <dbReference type="ChEBI" id="CHEBI:57287"/>
        <dbReference type="ChEBI" id="CHEBI:57387"/>
        <dbReference type="ChEBI" id="CHEBI:74549"/>
        <dbReference type="ChEBI" id="CHEBI:74550"/>
    </reaction>
    <physiologicalReaction direction="left-to-right" evidence="1">
        <dbReference type="Rhea" id="RHEA:37140"/>
    </physiologicalReaction>
</comment>
<comment type="catalytic activity">
    <reaction evidence="1">
        <text>1-(6Z,9Z,12Z-octadecatrienoyl)-sn-glycero-3-phosphate + (9Z)-octadecenoyl-CoA = (6Z,9Z,12Z)-octadecatrienoyl-2-(9Z)-octadecenoyl-sn-glycero-3-phosphate + CoA</text>
        <dbReference type="Rhea" id="RHEA:37179"/>
        <dbReference type="ChEBI" id="CHEBI:57287"/>
        <dbReference type="ChEBI" id="CHEBI:57387"/>
        <dbReference type="ChEBI" id="CHEBI:74581"/>
        <dbReference type="ChEBI" id="CHEBI:74582"/>
    </reaction>
    <physiologicalReaction direction="left-to-right" evidence="1">
        <dbReference type="Rhea" id="RHEA:37180"/>
    </physiologicalReaction>
</comment>
<comment type="catalytic activity">
    <reaction evidence="1">
        <text>1-eicosanoyl-sn-glycero-3-phosphate + (9Z)-octadecenoyl-CoA = 1-eicosanoyl-2-(9Z)-octadecenoyl-sn-glycero-3-phosphate + CoA</text>
        <dbReference type="Rhea" id="RHEA:37183"/>
        <dbReference type="ChEBI" id="CHEBI:57287"/>
        <dbReference type="ChEBI" id="CHEBI:57387"/>
        <dbReference type="ChEBI" id="CHEBI:74583"/>
        <dbReference type="ChEBI" id="CHEBI:74584"/>
    </reaction>
    <physiologicalReaction direction="left-to-right" evidence="1">
        <dbReference type="Rhea" id="RHEA:37184"/>
    </physiologicalReaction>
</comment>
<comment type="catalytic activity">
    <reaction evidence="1">
        <text>1-hexadecanoyl-sn-glycero-3-phosphate + octadecanoyl-CoA = 1-hexadecanoyl-2-octadecanoyl-sn-glycero-3-phosphate + CoA</text>
        <dbReference type="Rhea" id="RHEA:35907"/>
        <dbReference type="ChEBI" id="CHEBI:57287"/>
        <dbReference type="ChEBI" id="CHEBI:57394"/>
        <dbReference type="ChEBI" id="CHEBI:57518"/>
        <dbReference type="ChEBI" id="CHEBI:72857"/>
    </reaction>
    <physiologicalReaction direction="left-to-right" evidence="1">
        <dbReference type="Rhea" id="RHEA:35908"/>
    </physiologicalReaction>
</comment>
<comment type="catalytic activity">
    <reaction evidence="1">
        <text>1-hexadecanoyl-sn-glycero-3-phosphate + (5Z,8Z,11Z,14Z)-eicosatetraenoyl-CoA = 1-hexadecanoyl-2-(5Z,8Z,11Z,14Z-eicosatetraenoyl)-sn-glycero-3-phosphate + CoA</text>
        <dbReference type="Rhea" id="RHEA:35915"/>
        <dbReference type="ChEBI" id="CHEBI:57287"/>
        <dbReference type="ChEBI" id="CHEBI:57368"/>
        <dbReference type="ChEBI" id="CHEBI:57518"/>
        <dbReference type="ChEBI" id="CHEBI:72864"/>
    </reaction>
    <physiologicalReaction direction="left-to-right" evidence="1">
        <dbReference type="Rhea" id="RHEA:35916"/>
    </physiologicalReaction>
</comment>
<comment type="catalytic activity">
    <reaction evidence="1">
        <text>1-hexadecanoyl-sn-glycero-3-phosphate + hexadecanoyl-CoA = 1,2-dihexadecanoyl-sn-glycero-3-phosphate + CoA</text>
        <dbReference type="Rhea" id="RHEA:35903"/>
        <dbReference type="ChEBI" id="CHEBI:57287"/>
        <dbReference type="ChEBI" id="CHEBI:57379"/>
        <dbReference type="ChEBI" id="CHEBI:57518"/>
        <dbReference type="ChEBI" id="CHEBI:72859"/>
    </reaction>
    <physiologicalReaction direction="left-to-right" evidence="1">
        <dbReference type="Rhea" id="RHEA:35904"/>
    </physiologicalReaction>
</comment>
<comment type="catalytic activity">
    <reaction evidence="1">
        <text>1-hexadecanoyl-sn-glycero-3-phosphate + tetradecanoyl-CoA = 1-hexadecanoyl-2-tetradecanoyl-sn-glycero-3-phosphate + CoA</text>
        <dbReference type="Rhea" id="RHEA:35899"/>
        <dbReference type="ChEBI" id="CHEBI:57287"/>
        <dbReference type="ChEBI" id="CHEBI:57385"/>
        <dbReference type="ChEBI" id="CHEBI:57518"/>
        <dbReference type="ChEBI" id="CHEBI:72858"/>
    </reaction>
    <physiologicalReaction direction="left-to-right" evidence="1">
        <dbReference type="Rhea" id="RHEA:35900"/>
    </physiologicalReaction>
</comment>
<comment type="catalytic activity">
    <reaction evidence="1">
        <text>(11Z)-octadecenoyl-CoA + 1-(9Z-octadecenoyl)-sn-glycero-3-phosphate = 1-(9Z)-octadecenoyl-2-(11Z)-octadecenoyl-sn-glycero-3-phosphate + CoA</text>
        <dbReference type="Rhea" id="RHEA:37603"/>
        <dbReference type="ChEBI" id="CHEBI:57287"/>
        <dbReference type="ChEBI" id="CHEBI:74544"/>
        <dbReference type="ChEBI" id="CHEBI:75121"/>
        <dbReference type="ChEBI" id="CHEBI:75122"/>
    </reaction>
    <physiologicalReaction direction="left-to-right" evidence="1">
        <dbReference type="Rhea" id="RHEA:37604"/>
    </physiologicalReaction>
</comment>
<comment type="pathway">
    <text>Phospholipid metabolism; CDP-diacylglycerol biosynthesis; CDP-diacylglycerol from sn-glycerol 3-phosphate: step 2/3.</text>
</comment>
<comment type="subcellular location">
    <subcellularLocation>
        <location evidence="1">Endoplasmic reticulum membrane</location>
        <topology evidence="3">Multi-pass membrane protein</topology>
    </subcellularLocation>
</comment>
<comment type="tissue specificity">
    <text evidence="4">Expressed at high levels in the liver, at intermediate levels in the kidney, gut, heart and skeletal muscles. Undetectable in brain and spleen.</text>
</comment>
<comment type="induction">
    <text evidence="4">Down-regulated in the heart by clofibrate, a PPAR-alpha agonist.</text>
</comment>
<comment type="domain">
    <text evidence="2">The HXXXXD motif is essential for acyltransferase activity and may constitute the binding site for the phosphate moiety of the glycerol-3-phosphate.</text>
</comment>
<comment type="similarity">
    <text evidence="5">Belongs to the 1-acyl-sn-glycerol-3-phosphate acyltransferase family.</text>
</comment>
<organism>
    <name type="scientific">Mus musculus</name>
    <name type="common">Mouse</name>
    <dbReference type="NCBI Taxonomy" id="10090"/>
    <lineage>
        <taxon>Eukaryota</taxon>
        <taxon>Metazoa</taxon>
        <taxon>Chordata</taxon>
        <taxon>Craniata</taxon>
        <taxon>Vertebrata</taxon>
        <taxon>Euteleostomi</taxon>
        <taxon>Mammalia</taxon>
        <taxon>Eutheria</taxon>
        <taxon>Euarchontoglires</taxon>
        <taxon>Glires</taxon>
        <taxon>Rodentia</taxon>
        <taxon>Myomorpha</taxon>
        <taxon>Muroidea</taxon>
        <taxon>Muridae</taxon>
        <taxon>Murinae</taxon>
        <taxon>Mus</taxon>
        <taxon>Mus</taxon>
    </lineage>
</organism>
<proteinExistence type="evidence at protein level"/>
<gene>
    <name type="primary">Agpat2</name>
</gene>